<accession>Q1RK82</accession>
<organism>
    <name type="scientific">Rickettsia bellii (strain RML369-C)</name>
    <dbReference type="NCBI Taxonomy" id="336407"/>
    <lineage>
        <taxon>Bacteria</taxon>
        <taxon>Pseudomonadati</taxon>
        <taxon>Pseudomonadota</taxon>
        <taxon>Alphaproteobacteria</taxon>
        <taxon>Rickettsiales</taxon>
        <taxon>Rickettsiaceae</taxon>
        <taxon>Rickettsieae</taxon>
        <taxon>Rickettsia</taxon>
        <taxon>belli group</taxon>
    </lineage>
</organism>
<protein>
    <recommendedName>
        <fullName>Putative ankyrin repeat protein RBE_0151</fullName>
    </recommendedName>
</protein>
<dbReference type="EMBL" id="CP000087">
    <property type="protein sequence ID" value="ABE04232.1"/>
    <property type="molecule type" value="Genomic_DNA"/>
</dbReference>
<dbReference type="RefSeq" id="WP_011476847.1">
    <property type="nucleotide sequence ID" value="NC_007940.1"/>
</dbReference>
<dbReference type="SMR" id="Q1RK82"/>
<dbReference type="KEGG" id="rbe:RBE_0151"/>
<dbReference type="eggNOG" id="COG0666">
    <property type="taxonomic scope" value="Bacteria"/>
</dbReference>
<dbReference type="HOGENOM" id="CLU_138542_0_0_5"/>
<dbReference type="OrthoDB" id="7390289at2"/>
<dbReference type="Proteomes" id="UP000001951">
    <property type="component" value="Chromosome"/>
</dbReference>
<dbReference type="GO" id="GO:0003723">
    <property type="term" value="F:RNA binding"/>
    <property type="evidence" value="ECO:0007669"/>
    <property type="project" value="TreeGrafter"/>
</dbReference>
<dbReference type="GO" id="GO:0004540">
    <property type="term" value="F:RNA nuclease activity"/>
    <property type="evidence" value="ECO:0007669"/>
    <property type="project" value="TreeGrafter"/>
</dbReference>
<dbReference type="GO" id="GO:0006396">
    <property type="term" value="P:RNA processing"/>
    <property type="evidence" value="ECO:0007669"/>
    <property type="project" value="TreeGrafter"/>
</dbReference>
<dbReference type="Gene3D" id="1.25.40.20">
    <property type="entry name" value="Ankyrin repeat-containing domain"/>
    <property type="match status" value="1"/>
</dbReference>
<dbReference type="InterPro" id="IPR002110">
    <property type="entry name" value="Ankyrin_rpt"/>
</dbReference>
<dbReference type="InterPro" id="IPR036770">
    <property type="entry name" value="Ankyrin_rpt-contain_sf"/>
</dbReference>
<dbReference type="PANTHER" id="PTHR24141">
    <property type="entry name" value="2-5A-DEPENDENT RIBONUCLEASE"/>
    <property type="match status" value="1"/>
</dbReference>
<dbReference type="PANTHER" id="PTHR24141:SF1">
    <property type="entry name" value="2-5A-DEPENDENT RIBONUCLEASE"/>
    <property type="match status" value="1"/>
</dbReference>
<dbReference type="Pfam" id="PF12796">
    <property type="entry name" value="Ank_2"/>
    <property type="match status" value="1"/>
</dbReference>
<dbReference type="SMART" id="SM00248">
    <property type="entry name" value="ANK"/>
    <property type="match status" value="3"/>
</dbReference>
<dbReference type="SUPFAM" id="SSF48403">
    <property type="entry name" value="Ankyrin repeat"/>
    <property type="match status" value="1"/>
</dbReference>
<dbReference type="PROSITE" id="PS50297">
    <property type="entry name" value="ANK_REP_REGION"/>
    <property type="match status" value="1"/>
</dbReference>
<dbReference type="PROSITE" id="PS50088">
    <property type="entry name" value="ANK_REPEAT"/>
    <property type="match status" value="2"/>
</dbReference>
<name>Y151_RICBR</name>
<feature type="chain" id="PRO_0000280904" description="Putative ankyrin repeat protein RBE_0151">
    <location>
        <begin position="1"/>
        <end position="162"/>
    </location>
</feature>
<feature type="repeat" description="ANK 1">
    <location>
        <begin position="49"/>
        <end position="77"/>
    </location>
</feature>
<feature type="repeat" description="ANK 2">
    <location>
        <begin position="81"/>
        <end position="110"/>
    </location>
</feature>
<feature type="repeat" description="ANK 3">
    <location>
        <begin position="114"/>
        <end position="145"/>
    </location>
</feature>
<proteinExistence type="predicted"/>
<reference key="1">
    <citation type="journal article" date="2006" name="PLoS Genet.">
        <title>Genome sequence of Rickettsia bellii illuminates the role of amoebae in gene exchanges between intracellular pathogens.</title>
        <authorList>
            <person name="Ogata H."/>
            <person name="La Scola B."/>
            <person name="Audic S."/>
            <person name="Renesto P."/>
            <person name="Blanc G."/>
            <person name="Robert C."/>
            <person name="Fournier P.-E."/>
            <person name="Claverie J.-M."/>
            <person name="Raoult D."/>
        </authorList>
    </citation>
    <scope>NUCLEOTIDE SEQUENCE [LARGE SCALE GENOMIC DNA]</scope>
    <source>
        <strain>RML369-C</strain>
    </source>
</reference>
<gene>
    <name type="ordered locus">RBE_0151</name>
</gene>
<keyword id="KW-0040">ANK repeat</keyword>
<keyword id="KW-0677">Repeat</keyword>
<sequence length="162" mass="18677">MEITMTTAYYRHKYCPDTSYLRPKYIYIPKTPVRKFFESLIPPQIIDSEKWTDLHLAVGYKNIKLVQSVCNKHNINIKDAKGRTALELAILGDNLEIVQFLVQNGGVVAPNNMYGWSAIHLAIKVGNLDIVKYLYENTKFNEHDKYGLTLQNWAEKVGNEQI</sequence>